<sequence>MSTQYETQGYTINNAGRRLVVDPITRIEGHMRCEVNINDQNVITNAVSCGTMFRGLEIILQGRDPRDAWAFVERICGVCTGVHALASVYAIEDAIGIKVPDNANIIRNIMLATLWCHDHLVHFYQLAGMDWIDVLDALKADPRKTSELAQSLSSWPKSSPGYFFDVQNRLKKFVEGGQLGIFRNGYWGHPQYKLPPEANLMGFAHYLEALDFQREIVKIHAVFGGKNPHPNWIVGGMPCAINIDESGAVGAVNMERLNLVQSIITRTADFINNVMIPDALAIGQFNKPWSEIGTGLSDKCVLSYGAFPDIANDFGEKSLLMPGGAVINGDFNNVLPVDLVDPQQVQEFVDHAWYRYPNDQVGRHPFDGITDPWYNPGDVKGSDTNIQQLNEQERYSWIKAPRWRGNAMEVGPLARTLIAYHKGDAATVESVDRMMSALNLPLSGIQSTLGRILCRAHEAQWAAGKLQYFFDKLMTNLKNGNLATASTEKWEPATWPTECRGVGFTEAPRGALGHWAAIRDGKIDLYQCVVPTTWNASPRDPKGQIGAYEAALMNTKMAIPEQPLEILRTLHSFDPCLACSTHVLGDDGSELISVQVR</sequence>
<protein>
    <recommendedName>
        <fullName>Hydrogenase-1 large chain</fullName>
        <shortName>HYD1</shortName>
        <ecNumber>1.12.99.6</ecNumber>
    </recommendedName>
    <alternativeName>
        <fullName>Membrane-bound hydrogenase 1 large subunit</fullName>
    </alternativeName>
    <alternativeName>
        <fullName>NiFe hydrogenase</fullName>
    </alternativeName>
</protein>
<keyword id="KW-1003">Cell membrane</keyword>
<keyword id="KW-0472">Membrane</keyword>
<keyword id="KW-0479">Metal-binding</keyword>
<keyword id="KW-0533">Nickel</keyword>
<keyword id="KW-0560">Oxidoreductase</keyword>
<keyword id="KW-1185">Reference proteome</keyword>
<accession>P0ACD9</accession>
<accession>P19927</accession>
<accession>P78056</accession>
<name>MBHL_SHIFL</name>
<feature type="chain" id="PRO_0000199713" description="Hydrogenase-1 large chain">
    <location>
        <begin position="1"/>
        <end position="597"/>
    </location>
</feature>
<feature type="binding site" evidence="2">
    <location>
        <position position="76"/>
    </location>
    <ligand>
        <name>Ni(2+)</name>
        <dbReference type="ChEBI" id="CHEBI:49786"/>
    </ligand>
</feature>
<feature type="binding site" evidence="2">
    <location>
        <position position="79"/>
    </location>
    <ligand>
        <name>Ni(2+)</name>
        <dbReference type="ChEBI" id="CHEBI:49786"/>
    </ligand>
</feature>
<feature type="binding site" evidence="2">
    <location>
        <position position="576"/>
    </location>
    <ligand>
        <name>Ni(2+)</name>
        <dbReference type="ChEBI" id="CHEBI:49786"/>
    </ligand>
</feature>
<feature type="binding site" evidence="2">
    <location>
        <position position="579"/>
    </location>
    <ligand>
        <name>Ni(2+)</name>
        <dbReference type="ChEBI" id="CHEBI:49786"/>
    </ligand>
</feature>
<comment type="function">
    <text evidence="1">This is one of three E.coli hydrogenases synthesized in response to different physiological conditions. HYD1 is believed to have a role in hydrogen cycling during fermentative growth (By similarity).</text>
</comment>
<comment type="catalytic activity">
    <reaction>
        <text>H2 + A = AH2</text>
        <dbReference type="Rhea" id="RHEA:12116"/>
        <dbReference type="ChEBI" id="CHEBI:13193"/>
        <dbReference type="ChEBI" id="CHEBI:17499"/>
        <dbReference type="ChEBI" id="CHEBI:18276"/>
        <dbReference type="EC" id="1.12.99.6"/>
    </reaction>
</comment>
<comment type="cofactor">
    <cofactor evidence="1">
        <name>Ni(2+)</name>
        <dbReference type="ChEBI" id="CHEBI:49786"/>
    </cofactor>
    <text evidence="1">Binds 1 nickel ion per subunit.</text>
</comment>
<comment type="subunit">
    <text evidence="1">Heterodimer of a large and a small subunit.</text>
</comment>
<comment type="subcellular location">
    <subcellularLocation>
        <location evidence="1">Cell membrane</location>
        <topology evidence="1">Peripheral membrane protein</topology>
    </subcellularLocation>
</comment>
<comment type="similarity">
    <text evidence="3">Belongs to the [NiFe]/[NiFeSe] hydrogenase large subunit family.</text>
</comment>
<evidence type="ECO:0000250" key="1"/>
<evidence type="ECO:0000255" key="2"/>
<evidence type="ECO:0000305" key="3"/>
<proteinExistence type="inferred from homology"/>
<gene>
    <name type="primary">hyaB</name>
    <name type="ordered locus">SF0974</name>
    <name type="ordered locus">S1041</name>
</gene>
<reference key="1">
    <citation type="journal article" date="2002" name="Nucleic Acids Res.">
        <title>Genome sequence of Shigella flexneri 2a: insights into pathogenicity through comparison with genomes of Escherichia coli K12 and O157.</title>
        <authorList>
            <person name="Jin Q."/>
            <person name="Yuan Z."/>
            <person name="Xu J."/>
            <person name="Wang Y."/>
            <person name="Shen Y."/>
            <person name="Lu W."/>
            <person name="Wang J."/>
            <person name="Liu H."/>
            <person name="Yang J."/>
            <person name="Yang F."/>
            <person name="Zhang X."/>
            <person name="Zhang J."/>
            <person name="Yang G."/>
            <person name="Wu H."/>
            <person name="Qu D."/>
            <person name="Dong J."/>
            <person name="Sun L."/>
            <person name="Xue Y."/>
            <person name="Zhao A."/>
            <person name="Gao Y."/>
            <person name="Zhu J."/>
            <person name="Kan B."/>
            <person name="Ding K."/>
            <person name="Chen S."/>
            <person name="Cheng H."/>
            <person name="Yao Z."/>
            <person name="He B."/>
            <person name="Chen R."/>
            <person name="Ma D."/>
            <person name="Qiang B."/>
            <person name="Wen Y."/>
            <person name="Hou Y."/>
            <person name="Yu J."/>
        </authorList>
    </citation>
    <scope>NUCLEOTIDE SEQUENCE [LARGE SCALE GENOMIC DNA]</scope>
    <source>
        <strain>301 / Serotype 2a</strain>
    </source>
</reference>
<reference key="2">
    <citation type="journal article" date="2003" name="Infect. Immun.">
        <title>Complete genome sequence and comparative genomics of Shigella flexneri serotype 2a strain 2457T.</title>
        <authorList>
            <person name="Wei J."/>
            <person name="Goldberg M.B."/>
            <person name="Burland V."/>
            <person name="Venkatesan M.M."/>
            <person name="Deng W."/>
            <person name="Fournier G."/>
            <person name="Mayhew G.F."/>
            <person name="Plunkett G. III"/>
            <person name="Rose D.J."/>
            <person name="Darling A."/>
            <person name="Mau B."/>
            <person name="Perna N.T."/>
            <person name="Payne S.M."/>
            <person name="Runyen-Janecky L.J."/>
            <person name="Zhou S."/>
            <person name="Schwartz D.C."/>
            <person name="Blattner F.R."/>
        </authorList>
    </citation>
    <scope>NUCLEOTIDE SEQUENCE [LARGE SCALE GENOMIC DNA]</scope>
    <source>
        <strain>ATCC 700930 / 2457T / Serotype 2a</strain>
    </source>
</reference>
<dbReference type="EC" id="1.12.99.6"/>
<dbReference type="EMBL" id="AE005674">
    <property type="protein sequence ID" value="AAN42602.1"/>
    <property type="molecule type" value="Genomic_DNA"/>
</dbReference>
<dbReference type="EMBL" id="AE014073">
    <property type="protein sequence ID" value="AAP16488.1"/>
    <property type="molecule type" value="Genomic_DNA"/>
</dbReference>
<dbReference type="RefSeq" id="NP_706895.1">
    <property type="nucleotide sequence ID" value="NC_004337.2"/>
</dbReference>
<dbReference type="RefSeq" id="WP_000107384.1">
    <property type="nucleotide sequence ID" value="NZ_WPGW01000043.1"/>
</dbReference>
<dbReference type="SMR" id="P0ACD9"/>
<dbReference type="STRING" id="198214.SF0974"/>
<dbReference type="PaxDb" id="198214-SF0974"/>
<dbReference type="GeneID" id="1023947"/>
<dbReference type="KEGG" id="sfl:SF0974"/>
<dbReference type="KEGG" id="sfx:S1041"/>
<dbReference type="PATRIC" id="fig|198214.7.peg.1133"/>
<dbReference type="HOGENOM" id="CLU_030087_0_0_6"/>
<dbReference type="Proteomes" id="UP000001006">
    <property type="component" value="Chromosome"/>
</dbReference>
<dbReference type="Proteomes" id="UP000002673">
    <property type="component" value="Chromosome"/>
</dbReference>
<dbReference type="GO" id="GO:0005886">
    <property type="term" value="C:plasma membrane"/>
    <property type="evidence" value="ECO:0007669"/>
    <property type="project" value="UniProtKB-SubCell"/>
</dbReference>
<dbReference type="GO" id="GO:0008901">
    <property type="term" value="F:ferredoxin hydrogenase activity"/>
    <property type="evidence" value="ECO:0007669"/>
    <property type="project" value="InterPro"/>
</dbReference>
<dbReference type="GO" id="GO:0033748">
    <property type="term" value="F:hydrogenase (acceptor) activity"/>
    <property type="evidence" value="ECO:0007669"/>
    <property type="project" value="UniProtKB-EC"/>
</dbReference>
<dbReference type="GO" id="GO:0016151">
    <property type="term" value="F:nickel cation binding"/>
    <property type="evidence" value="ECO:0007669"/>
    <property type="project" value="InterPro"/>
</dbReference>
<dbReference type="FunFam" id="1.10.645.10:FF:000002">
    <property type="entry name" value="Hydrogenase 2 large subunit"/>
    <property type="match status" value="1"/>
</dbReference>
<dbReference type="Gene3D" id="1.10.645.10">
    <property type="entry name" value="Cytochrome-c3 Hydrogenase, chain B"/>
    <property type="match status" value="1"/>
</dbReference>
<dbReference type="InterPro" id="IPR001501">
    <property type="entry name" value="Ni-dep_hyd_lsu"/>
</dbReference>
<dbReference type="InterPro" id="IPR018194">
    <property type="entry name" value="Ni-dep_hyd_lsu_Ni_BS"/>
</dbReference>
<dbReference type="InterPro" id="IPR029014">
    <property type="entry name" value="NiFe-Hase_large"/>
</dbReference>
<dbReference type="InterPro" id="IPR050867">
    <property type="entry name" value="NiFe/NiFeSe_hydrgnase_LSU"/>
</dbReference>
<dbReference type="NCBIfam" id="NF007550">
    <property type="entry name" value="PRK10170.1"/>
    <property type="match status" value="1"/>
</dbReference>
<dbReference type="PANTHER" id="PTHR42958:SF3">
    <property type="entry name" value="HYDROGENASE-1 LARGE CHAIN"/>
    <property type="match status" value="1"/>
</dbReference>
<dbReference type="PANTHER" id="PTHR42958">
    <property type="entry name" value="HYDROGENASE-2 LARGE CHAIN"/>
    <property type="match status" value="1"/>
</dbReference>
<dbReference type="Pfam" id="PF00374">
    <property type="entry name" value="NiFeSe_Hases"/>
    <property type="match status" value="1"/>
</dbReference>
<dbReference type="SUPFAM" id="SSF56762">
    <property type="entry name" value="HydB/Nqo4-like"/>
    <property type="match status" value="1"/>
</dbReference>
<dbReference type="PROSITE" id="PS00507">
    <property type="entry name" value="NI_HGENASE_L_1"/>
    <property type="match status" value="1"/>
</dbReference>
<dbReference type="PROSITE" id="PS00508">
    <property type="entry name" value="NI_HGENASE_L_2"/>
    <property type="match status" value="1"/>
</dbReference>
<organism>
    <name type="scientific">Shigella flexneri</name>
    <dbReference type="NCBI Taxonomy" id="623"/>
    <lineage>
        <taxon>Bacteria</taxon>
        <taxon>Pseudomonadati</taxon>
        <taxon>Pseudomonadota</taxon>
        <taxon>Gammaproteobacteria</taxon>
        <taxon>Enterobacterales</taxon>
        <taxon>Enterobacteriaceae</taxon>
        <taxon>Shigella</taxon>
    </lineage>
</organism>